<name>ST6B1_GORGO</name>
<proteinExistence type="inferred from homology"/>
<dbReference type="EC" id="2.8.2.n2"/>
<dbReference type="EMBL" id="AY289789">
    <property type="protein sequence ID" value="AAQ23222.1"/>
    <property type="status" value="ALT_INIT"/>
    <property type="molecule type" value="Genomic_DNA"/>
</dbReference>
<dbReference type="EMBL" id="AY289783">
    <property type="protein sequence ID" value="AAQ23222.1"/>
    <property type="status" value="JOINED"/>
    <property type="molecule type" value="Genomic_DNA"/>
</dbReference>
<dbReference type="EMBL" id="AY289784">
    <property type="protein sequence ID" value="AAQ23222.1"/>
    <property type="status" value="JOINED"/>
    <property type="molecule type" value="Genomic_DNA"/>
</dbReference>
<dbReference type="EMBL" id="AY289785">
    <property type="protein sequence ID" value="AAQ23222.1"/>
    <property type="status" value="JOINED"/>
    <property type="molecule type" value="Genomic_DNA"/>
</dbReference>
<dbReference type="EMBL" id="AY289786">
    <property type="protein sequence ID" value="AAQ23222.1"/>
    <property type="status" value="JOINED"/>
    <property type="molecule type" value="Genomic_DNA"/>
</dbReference>
<dbReference type="EMBL" id="AY289787">
    <property type="protein sequence ID" value="AAQ23222.1"/>
    <property type="status" value="JOINED"/>
    <property type="molecule type" value="Genomic_DNA"/>
</dbReference>
<dbReference type="EMBL" id="AY289788">
    <property type="protein sequence ID" value="AAQ23222.1"/>
    <property type="status" value="JOINED"/>
    <property type="molecule type" value="Genomic_DNA"/>
</dbReference>
<dbReference type="SMR" id="Q6WG17"/>
<dbReference type="FunCoup" id="Q6WG17">
    <property type="interactions" value="407"/>
</dbReference>
<dbReference type="STRING" id="9593.ENSGGOP00000008043"/>
<dbReference type="eggNOG" id="KOG1584">
    <property type="taxonomic scope" value="Eukaryota"/>
</dbReference>
<dbReference type="InParanoid" id="Q6WG17"/>
<dbReference type="Proteomes" id="UP000001519">
    <property type="component" value="Unplaced"/>
</dbReference>
<dbReference type="GO" id="GO:0005737">
    <property type="term" value="C:cytoplasm"/>
    <property type="evidence" value="ECO:0000318"/>
    <property type="project" value="GO_Central"/>
</dbReference>
<dbReference type="GO" id="GO:0005829">
    <property type="term" value="C:cytosol"/>
    <property type="evidence" value="ECO:0007669"/>
    <property type="project" value="UniProtKB-SubCell"/>
</dbReference>
<dbReference type="GO" id="GO:0008146">
    <property type="term" value="F:sulfotransferase activity"/>
    <property type="evidence" value="ECO:0007669"/>
    <property type="project" value="InterPro"/>
</dbReference>
<dbReference type="GO" id="GO:0051923">
    <property type="term" value="P:sulfation"/>
    <property type="evidence" value="ECO:0000318"/>
    <property type="project" value="GO_Central"/>
</dbReference>
<dbReference type="FunFam" id="3.40.50.300:FF:002302">
    <property type="entry name" value="Sulfotransferase"/>
    <property type="match status" value="1"/>
</dbReference>
<dbReference type="Gene3D" id="3.40.50.300">
    <property type="entry name" value="P-loop containing nucleotide triphosphate hydrolases"/>
    <property type="match status" value="1"/>
</dbReference>
<dbReference type="InterPro" id="IPR027417">
    <property type="entry name" value="P-loop_NTPase"/>
</dbReference>
<dbReference type="InterPro" id="IPR000863">
    <property type="entry name" value="Sulfotransferase_dom"/>
</dbReference>
<dbReference type="PANTHER" id="PTHR11783">
    <property type="entry name" value="SULFOTRANSFERASE SULT"/>
    <property type="match status" value="1"/>
</dbReference>
<dbReference type="Pfam" id="PF00685">
    <property type="entry name" value="Sulfotransfer_1"/>
    <property type="match status" value="1"/>
</dbReference>
<dbReference type="SUPFAM" id="SSF52540">
    <property type="entry name" value="P-loop containing nucleoside triphosphate hydrolases"/>
    <property type="match status" value="1"/>
</dbReference>
<keyword id="KW-0963">Cytoplasm</keyword>
<keyword id="KW-1185">Reference proteome</keyword>
<keyword id="KW-0808">Transferase</keyword>
<gene>
    <name type="primary">SULT6B1</name>
</gene>
<accession>Q6WG17</accession>
<comment type="function">
    <text evidence="1">Sulfotransferase that utilizes 3'-phospho-5'-adenylyl sulfate (PAPS) as sulfonate donor to catalyze the sulfate conjugation of thyroxine. Involved in the metabolism of thyroxine (By similarity).</text>
</comment>
<comment type="catalytic activity">
    <reaction evidence="1">
        <text>thyroxine + 3'-phosphoadenylyl sulfate = thyroxine sulfate + adenosine 3',5'-bisphosphate + H(+)</text>
        <dbReference type="Rhea" id="RHEA:26422"/>
        <dbReference type="ChEBI" id="CHEBI:15378"/>
        <dbReference type="ChEBI" id="CHEBI:58339"/>
        <dbReference type="ChEBI" id="CHEBI:58343"/>
        <dbReference type="ChEBI" id="CHEBI:58910"/>
        <dbReference type="ChEBI" id="CHEBI:305790"/>
        <dbReference type="EC" id="2.8.2.n2"/>
    </reaction>
</comment>
<comment type="subcellular location">
    <subcellularLocation>
        <location evidence="1">Cytoplasm</location>
        <location evidence="1">Cytosol</location>
    </subcellularLocation>
</comment>
<comment type="similarity">
    <text evidence="3">Belongs to the sulfotransferase 1 family.</text>
</comment>
<comment type="sequence caution" evidence="3">
    <conflict type="erroneous initiation">
        <sequence resource="EMBL-CDS" id="AAQ23222"/>
    </conflict>
</comment>
<evidence type="ECO:0000250" key="1">
    <source>
        <dbReference type="UniProtKB" id="P0CC03"/>
    </source>
</evidence>
<evidence type="ECO:0000250" key="2">
    <source>
        <dbReference type="UniProtKB" id="P49891"/>
    </source>
</evidence>
<evidence type="ECO:0000305" key="3"/>
<sequence length="303" mass="34809">MADKSKFTEYIDKALEKSKETALSHLFFTYQGIAYPITMCTSETFQALDTFEARHDDIVLASYPKCGSNWILHIVSELIYAVSKKKYKYPEFPVLECGDSEKYQRMKGFPSPRILATHLHYDKLPGSIFKNKAKILVIFRNPTDTAVSFFHFHNDVPDIPSYGSWDELFRQFMKGQVSWGSYFDFAINWNKHLDGDNVKFILYEDLKENLAAGIKQIPEFLGFFLTGEQIQTISVQSTFQAMRAKSQDTHGAVGPFLFRKGEVGDWKNLFSEIQNQEMDEKFKECLAGTSLGAKLKYESYCQG</sequence>
<feature type="chain" id="PRO_0000085170" description="Sulfotransferase 6B1">
    <location>
        <begin position="1"/>
        <end position="303"/>
    </location>
</feature>
<feature type="active site" description="Proton acceptor" evidence="2">
    <location>
        <position position="118"/>
    </location>
</feature>
<feature type="binding site" evidence="2">
    <location>
        <begin position="65"/>
        <end position="70"/>
    </location>
    <ligand>
        <name>3'-phosphoadenylyl sulfate</name>
        <dbReference type="ChEBI" id="CHEBI:58339"/>
    </ligand>
</feature>
<feature type="binding site" evidence="2">
    <location>
        <position position="140"/>
    </location>
    <ligand>
        <name>3'-phosphoadenylyl sulfate</name>
        <dbReference type="ChEBI" id="CHEBI:58339"/>
    </ligand>
</feature>
<feature type="binding site" evidence="2">
    <location>
        <position position="148"/>
    </location>
    <ligand>
        <name>3'-phosphoadenylyl sulfate</name>
        <dbReference type="ChEBI" id="CHEBI:58339"/>
    </ligand>
</feature>
<feature type="binding site" evidence="2">
    <location>
        <position position="203"/>
    </location>
    <ligand>
        <name>3'-phosphoadenylyl sulfate</name>
        <dbReference type="ChEBI" id="CHEBI:58339"/>
    </ligand>
</feature>
<feature type="binding site" evidence="2">
    <location>
        <begin position="237"/>
        <end position="242"/>
    </location>
    <ligand>
        <name>3'-phosphoadenylyl sulfate</name>
        <dbReference type="ChEBI" id="CHEBI:58339"/>
    </ligand>
</feature>
<feature type="binding site" evidence="2">
    <location>
        <begin position="259"/>
        <end position="261"/>
    </location>
    <ligand>
        <name>3'-phosphoadenylyl sulfate</name>
        <dbReference type="ChEBI" id="CHEBI:58339"/>
    </ligand>
</feature>
<reference key="1">
    <citation type="journal article" date="2004" name="Pharmacogenomics J.">
        <title>Human cytosolic sulfotransferase database mining: identification of seven novel genes and pseudogenes.</title>
        <authorList>
            <person name="Freimuth R.R."/>
            <person name="Wiepert M."/>
            <person name="Chute C.G."/>
            <person name="Wieben E.D."/>
            <person name="Weinshilboum R.M."/>
        </authorList>
    </citation>
    <scope>NUCLEOTIDE SEQUENCE [GENOMIC DNA]</scope>
</reference>
<organism>
    <name type="scientific">Gorilla gorilla gorilla</name>
    <name type="common">Western lowland gorilla</name>
    <dbReference type="NCBI Taxonomy" id="9595"/>
    <lineage>
        <taxon>Eukaryota</taxon>
        <taxon>Metazoa</taxon>
        <taxon>Chordata</taxon>
        <taxon>Craniata</taxon>
        <taxon>Vertebrata</taxon>
        <taxon>Euteleostomi</taxon>
        <taxon>Mammalia</taxon>
        <taxon>Eutheria</taxon>
        <taxon>Euarchontoglires</taxon>
        <taxon>Primates</taxon>
        <taxon>Haplorrhini</taxon>
        <taxon>Catarrhini</taxon>
        <taxon>Hominidae</taxon>
        <taxon>Gorilla</taxon>
    </lineage>
</organism>
<protein>
    <recommendedName>
        <fullName>Sulfotransferase 6B1</fullName>
        <shortName>ST6B1</shortName>
    </recommendedName>
    <alternativeName>
        <fullName>Thyroxine sulfotransferase</fullName>
        <ecNumber>2.8.2.n2</ecNumber>
    </alternativeName>
</protein>